<comment type="catalytic activity">
    <reaction evidence="2">
        <text>GTP + H2O = 7,8-dihydroneopterin 3'-triphosphate + formate + H(+)</text>
        <dbReference type="Rhea" id="RHEA:17473"/>
        <dbReference type="ChEBI" id="CHEBI:15377"/>
        <dbReference type="ChEBI" id="CHEBI:15378"/>
        <dbReference type="ChEBI" id="CHEBI:15740"/>
        <dbReference type="ChEBI" id="CHEBI:37565"/>
        <dbReference type="ChEBI" id="CHEBI:58462"/>
        <dbReference type="EC" id="3.5.4.16"/>
    </reaction>
</comment>
<comment type="pathway">
    <text evidence="2">Cofactor biosynthesis; 7,8-dihydroneopterin triphosphate biosynthesis; 7,8-dihydroneopterin triphosphate from GTP: step 1/1.</text>
</comment>
<comment type="subunit">
    <text evidence="1">Toroid-shaped homodecamer, composed of two pentamers of five dimers.</text>
</comment>
<comment type="similarity">
    <text evidence="2">Belongs to the GTP cyclohydrolase I family.</text>
</comment>
<gene>
    <name evidence="2" type="primary">folE</name>
    <name type="ordered locus">Sputw3181_0334</name>
</gene>
<organism>
    <name type="scientific">Shewanella sp. (strain W3-18-1)</name>
    <dbReference type="NCBI Taxonomy" id="351745"/>
    <lineage>
        <taxon>Bacteria</taxon>
        <taxon>Pseudomonadati</taxon>
        <taxon>Pseudomonadota</taxon>
        <taxon>Gammaproteobacteria</taxon>
        <taxon>Alteromonadales</taxon>
        <taxon>Shewanellaceae</taxon>
        <taxon>Shewanella</taxon>
    </lineage>
</organism>
<reference key="1">
    <citation type="submission" date="2006-12" db="EMBL/GenBank/DDBJ databases">
        <title>Complete sequence of Shewanella sp. W3-18-1.</title>
        <authorList>
            <consortium name="US DOE Joint Genome Institute"/>
            <person name="Copeland A."/>
            <person name="Lucas S."/>
            <person name="Lapidus A."/>
            <person name="Barry K."/>
            <person name="Detter J.C."/>
            <person name="Glavina del Rio T."/>
            <person name="Hammon N."/>
            <person name="Israni S."/>
            <person name="Dalin E."/>
            <person name="Tice H."/>
            <person name="Pitluck S."/>
            <person name="Chain P."/>
            <person name="Malfatti S."/>
            <person name="Shin M."/>
            <person name="Vergez L."/>
            <person name="Schmutz J."/>
            <person name="Larimer F."/>
            <person name="Land M."/>
            <person name="Hauser L."/>
            <person name="Kyrpides N."/>
            <person name="Lykidis A."/>
            <person name="Tiedje J."/>
            <person name="Richardson P."/>
        </authorList>
    </citation>
    <scope>NUCLEOTIDE SEQUENCE [LARGE SCALE GENOMIC DNA]</scope>
    <source>
        <strain>W3-18-1</strain>
    </source>
</reference>
<keyword id="KW-0342">GTP-binding</keyword>
<keyword id="KW-0378">Hydrolase</keyword>
<keyword id="KW-0479">Metal-binding</keyword>
<keyword id="KW-0547">Nucleotide-binding</keyword>
<keyword id="KW-0554">One-carbon metabolism</keyword>
<keyword id="KW-0862">Zinc</keyword>
<dbReference type="EC" id="3.5.4.16" evidence="2"/>
<dbReference type="EMBL" id="CP000503">
    <property type="protein sequence ID" value="ABM23185.1"/>
    <property type="molecule type" value="Genomic_DNA"/>
</dbReference>
<dbReference type="RefSeq" id="WP_011787730.1">
    <property type="nucleotide sequence ID" value="NC_008750.1"/>
</dbReference>
<dbReference type="SMR" id="A1REU0"/>
<dbReference type="GeneID" id="67441916"/>
<dbReference type="KEGG" id="shw:Sputw3181_0334"/>
<dbReference type="HOGENOM" id="CLU_049768_3_2_6"/>
<dbReference type="UniPathway" id="UPA00848">
    <property type="reaction ID" value="UER00151"/>
</dbReference>
<dbReference type="Proteomes" id="UP000002597">
    <property type="component" value="Chromosome"/>
</dbReference>
<dbReference type="GO" id="GO:0005737">
    <property type="term" value="C:cytoplasm"/>
    <property type="evidence" value="ECO:0007669"/>
    <property type="project" value="TreeGrafter"/>
</dbReference>
<dbReference type="GO" id="GO:0005525">
    <property type="term" value="F:GTP binding"/>
    <property type="evidence" value="ECO:0007669"/>
    <property type="project" value="UniProtKB-KW"/>
</dbReference>
<dbReference type="GO" id="GO:0003934">
    <property type="term" value="F:GTP cyclohydrolase I activity"/>
    <property type="evidence" value="ECO:0007669"/>
    <property type="project" value="UniProtKB-UniRule"/>
</dbReference>
<dbReference type="GO" id="GO:0008270">
    <property type="term" value="F:zinc ion binding"/>
    <property type="evidence" value="ECO:0007669"/>
    <property type="project" value="UniProtKB-UniRule"/>
</dbReference>
<dbReference type="GO" id="GO:0006730">
    <property type="term" value="P:one-carbon metabolic process"/>
    <property type="evidence" value="ECO:0007669"/>
    <property type="project" value="UniProtKB-UniRule"/>
</dbReference>
<dbReference type="GO" id="GO:0006729">
    <property type="term" value="P:tetrahydrobiopterin biosynthetic process"/>
    <property type="evidence" value="ECO:0007669"/>
    <property type="project" value="TreeGrafter"/>
</dbReference>
<dbReference type="GO" id="GO:0046654">
    <property type="term" value="P:tetrahydrofolate biosynthetic process"/>
    <property type="evidence" value="ECO:0007669"/>
    <property type="project" value="UniProtKB-UniRule"/>
</dbReference>
<dbReference type="FunFam" id="1.10.286.10:FF:000002">
    <property type="entry name" value="GTP cyclohydrolase 1"/>
    <property type="match status" value="1"/>
</dbReference>
<dbReference type="FunFam" id="3.30.1130.10:FF:000001">
    <property type="entry name" value="GTP cyclohydrolase 1"/>
    <property type="match status" value="1"/>
</dbReference>
<dbReference type="Gene3D" id="1.10.286.10">
    <property type="match status" value="1"/>
</dbReference>
<dbReference type="Gene3D" id="3.30.1130.10">
    <property type="match status" value="1"/>
</dbReference>
<dbReference type="HAMAP" id="MF_00223">
    <property type="entry name" value="FolE"/>
    <property type="match status" value="1"/>
</dbReference>
<dbReference type="InterPro" id="IPR043133">
    <property type="entry name" value="GTP-CH-I_C/QueF"/>
</dbReference>
<dbReference type="InterPro" id="IPR043134">
    <property type="entry name" value="GTP-CH-I_N"/>
</dbReference>
<dbReference type="InterPro" id="IPR001474">
    <property type="entry name" value="GTP_CycHdrlase_I"/>
</dbReference>
<dbReference type="InterPro" id="IPR018234">
    <property type="entry name" value="GTP_CycHdrlase_I_CS"/>
</dbReference>
<dbReference type="InterPro" id="IPR020602">
    <property type="entry name" value="GTP_CycHdrlase_I_dom"/>
</dbReference>
<dbReference type="NCBIfam" id="TIGR00063">
    <property type="entry name" value="folE"/>
    <property type="match status" value="1"/>
</dbReference>
<dbReference type="NCBIfam" id="NF006824">
    <property type="entry name" value="PRK09347.1-1"/>
    <property type="match status" value="1"/>
</dbReference>
<dbReference type="NCBIfam" id="NF006826">
    <property type="entry name" value="PRK09347.1-3"/>
    <property type="match status" value="1"/>
</dbReference>
<dbReference type="PANTHER" id="PTHR11109:SF7">
    <property type="entry name" value="GTP CYCLOHYDROLASE 1"/>
    <property type="match status" value="1"/>
</dbReference>
<dbReference type="PANTHER" id="PTHR11109">
    <property type="entry name" value="GTP CYCLOHYDROLASE I"/>
    <property type="match status" value="1"/>
</dbReference>
<dbReference type="Pfam" id="PF01227">
    <property type="entry name" value="GTP_cyclohydroI"/>
    <property type="match status" value="1"/>
</dbReference>
<dbReference type="SUPFAM" id="SSF55620">
    <property type="entry name" value="Tetrahydrobiopterin biosynthesis enzymes-like"/>
    <property type="match status" value="1"/>
</dbReference>
<dbReference type="PROSITE" id="PS00859">
    <property type="entry name" value="GTP_CYCLOHYDROL_1_1"/>
    <property type="match status" value="1"/>
</dbReference>
<dbReference type="PROSITE" id="PS00860">
    <property type="entry name" value="GTP_CYCLOHYDROL_1_2"/>
    <property type="match status" value="1"/>
</dbReference>
<accession>A1REU0</accession>
<sequence length="214" mass="24017">MALSEAAVKVQAALLERGLETPMLPSVYSSEERKDKIEHHMKEILTLMSLDLSDDSLADTPRRIAKMYVDEIFSGLDYENFPKITVIDNKMGFDEMVRVQDISLTSTCEHHLVTIDGTATIAYLPRKKIIGLSKINRIVRFFAQRPQVQERLTQQVLVALQTLLETKDVAVKMDAVHYCVKSRGVMDSTSSTTTTALGGIFKSNPATRAEFLHQ</sequence>
<protein>
    <recommendedName>
        <fullName evidence="2">GTP cyclohydrolase 1</fullName>
        <ecNumber evidence="2">3.5.4.16</ecNumber>
    </recommendedName>
    <alternativeName>
        <fullName evidence="2">GTP cyclohydrolase I</fullName>
        <shortName evidence="2">GTP-CH-I</shortName>
    </alternativeName>
</protein>
<feature type="chain" id="PRO_1000043737" description="GTP cyclohydrolase 1">
    <location>
        <begin position="1"/>
        <end position="214"/>
    </location>
</feature>
<feature type="binding site" evidence="2">
    <location>
        <position position="108"/>
    </location>
    <ligand>
        <name>Zn(2+)</name>
        <dbReference type="ChEBI" id="CHEBI:29105"/>
    </ligand>
</feature>
<feature type="binding site" evidence="2">
    <location>
        <position position="111"/>
    </location>
    <ligand>
        <name>Zn(2+)</name>
        <dbReference type="ChEBI" id="CHEBI:29105"/>
    </ligand>
</feature>
<feature type="binding site" evidence="2">
    <location>
        <position position="179"/>
    </location>
    <ligand>
        <name>Zn(2+)</name>
        <dbReference type="ChEBI" id="CHEBI:29105"/>
    </ligand>
</feature>
<proteinExistence type="inferred from homology"/>
<evidence type="ECO:0000250" key="1"/>
<evidence type="ECO:0000255" key="2">
    <source>
        <dbReference type="HAMAP-Rule" id="MF_00223"/>
    </source>
</evidence>
<name>GCH1_SHESW</name>